<evidence type="ECO:0000255" key="1"/>
<evidence type="ECO:0000269" key="2">
    <source>
    </source>
</evidence>
<evidence type="ECO:0000269" key="3">
    <source>
    </source>
</evidence>
<evidence type="ECO:0000269" key="4">
    <source>
    </source>
</evidence>
<evidence type="ECO:0000303" key="5">
    <source>
    </source>
</evidence>
<evidence type="ECO:0000305" key="6"/>
<evidence type="ECO:0000312" key="7">
    <source>
        <dbReference type="EMBL" id="AAM51137.1"/>
    </source>
</evidence>
<evidence type="ECO:0000312" key="8">
    <source>
        <dbReference type="EMBL" id="CAA21830.1"/>
    </source>
</evidence>
<evidence type="ECO:0000312" key="9">
    <source>
        <dbReference type="FlyBase" id="FBgn0026085"/>
    </source>
</evidence>
<evidence type="ECO:0000312" key="10">
    <source>
        <dbReference type="Proteomes" id="UP000000803"/>
    </source>
</evidence>
<reference evidence="10" key="1">
    <citation type="journal article" date="2000" name="Science">
        <title>The genome sequence of Drosophila melanogaster.</title>
        <authorList>
            <person name="Adams M.D."/>
            <person name="Celniker S.E."/>
            <person name="Holt R.A."/>
            <person name="Evans C.A."/>
            <person name="Gocayne J.D."/>
            <person name="Amanatides P.G."/>
            <person name="Scherer S.E."/>
            <person name="Li P.W."/>
            <person name="Hoskins R.A."/>
            <person name="Galle R.F."/>
            <person name="George R.A."/>
            <person name="Lewis S.E."/>
            <person name="Richards S."/>
            <person name="Ashburner M."/>
            <person name="Henderson S.N."/>
            <person name="Sutton G.G."/>
            <person name="Wortman J.R."/>
            <person name="Yandell M.D."/>
            <person name="Zhang Q."/>
            <person name="Chen L.X."/>
            <person name="Brandon R.C."/>
            <person name="Rogers Y.-H.C."/>
            <person name="Blazej R.G."/>
            <person name="Champe M."/>
            <person name="Pfeiffer B.D."/>
            <person name="Wan K.H."/>
            <person name="Doyle C."/>
            <person name="Baxter E.G."/>
            <person name="Helt G."/>
            <person name="Nelson C.R."/>
            <person name="Miklos G.L.G."/>
            <person name="Abril J.F."/>
            <person name="Agbayani A."/>
            <person name="An H.-J."/>
            <person name="Andrews-Pfannkoch C."/>
            <person name="Baldwin D."/>
            <person name="Ballew R.M."/>
            <person name="Basu A."/>
            <person name="Baxendale J."/>
            <person name="Bayraktaroglu L."/>
            <person name="Beasley E.M."/>
            <person name="Beeson K.Y."/>
            <person name="Benos P.V."/>
            <person name="Berman B.P."/>
            <person name="Bhandari D."/>
            <person name="Bolshakov S."/>
            <person name="Borkova D."/>
            <person name="Botchan M.R."/>
            <person name="Bouck J."/>
            <person name="Brokstein P."/>
            <person name="Brottier P."/>
            <person name="Burtis K.C."/>
            <person name="Busam D.A."/>
            <person name="Butler H."/>
            <person name="Cadieu E."/>
            <person name="Center A."/>
            <person name="Chandra I."/>
            <person name="Cherry J.M."/>
            <person name="Cawley S."/>
            <person name="Dahlke C."/>
            <person name="Davenport L.B."/>
            <person name="Davies P."/>
            <person name="de Pablos B."/>
            <person name="Delcher A."/>
            <person name="Deng Z."/>
            <person name="Mays A.D."/>
            <person name="Dew I."/>
            <person name="Dietz S.M."/>
            <person name="Dodson K."/>
            <person name="Doup L.E."/>
            <person name="Downes M."/>
            <person name="Dugan-Rocha S."/>
            <person name="Dunkov B.C."/>
            <person name="Dunn P."/>
            <person name="Durbin K.J."/>
            <person name="Evangelista C.C."/>
            <person name="Ferraz C."/>
            <person name="Ferriera S."/>
            <person name="Fleischmann W."/>
            <person name="Fosler C."/>
            <person name="Gabrielian A.E."/>
            <person name="Garg N.S."/>
            <person name="Gelbart W.M."/>
            <person name="Glasser K."/>
            <person name="Glodek A."/>
            <person name="Gong F."/>
            <person name="Gorrell J.H."/>
            <person name="Gu Z."/>
            <person name="Guan P."/>
            <person name="Harris M."/>
            <person name="Harris N.L."/>
            <person name="Harvey D.A."/>
            <person name="Heiman T.J."/>
            <person name="Hernandez J.R."/>
            <person name="Houck J."/>
            <person name="Hostin D."/>
            <person name="Houston K.A."/>
            <person name="Howland T.J."/>
            <person name="Wei M.-H."/>
            <person name="Ibegwam C."/>
            <person name="Jalali M."/>
            <person name="Kalush F."/>
            <person name="Karpen G.H."/>
            <person name="Ke Z."/>
            <person name="Kennison J.A."/>
            <person name="Ketchum K.A."/>
            <person name="Kimmel B.E."/>
            <person name="Kodira C.D."/>
            <person name="Kraft C.L."/>
            <person name="Kravitz S."/>
            <person name="Kulp D."/>
            <person name="Lai Z."/>
            <person name="Lasko P."/>
            <person name="Lei Y."/>
            <person name="Levitsky A.A."/>
            <person name="Li J.H."/>
            <person name="Li Z."/>
            <person name="Liang Y."/>
            <person name="Lin X."/>
            <person name="Liu X."/>
            <person name="Mattei B."/>
            <person name="McIntosh T.C."/>
            <person name="McLeod M.P."/>
            <person name="McPherson D."/>
            <person name="Merkulov G."/>
            <person name="Milshina N.V."/>
            <person name="Mobarry C."/>
            <person name="Morris J."/>
            <person name="Moshrefi A."/>
            <person name="Mount S.M."/>
            <person name="Moy M."/>
            <person name="Murphy B."/>
            <person name="Murphy L."/>
            <person name="Muzny D.M."/>
            <person name="Nelson D.L."/>
            <person name="Nelson D.R."/>
            <person name="Nelson K.A."/>
            <person name="Nixon K."/>
            <person name="Nusskern D.R."/>
            <person name="Pacleb J.M."/>
            <person name="Palazzolo M."/>
            <person name="Pittman G.S."/>
            <person name="Pan S."/>
            <person name="Pollard J."/>
            <person name="Puri V."/>
            <person name="Reese M.G."/>
            <person name="Reinert K."/>
            <person name="Remington K."/>
            <person name="Saunders R.D.C."/>
            <person name="Scheeler F."/>
            <person name="Shen H."/>
            <person name="Shue B.C."/>
            <person name="Siden-Kiamos I."/>
            <person name="Simpson M."/>
            <person name="Skupski M.P."/>
            <person name="Smith T.J."/>
            <person name="Spier E."/>
            <person name="Spradling A.C."/>
            <person name="Stapleton M."/>
            <person name="Strong R."/>
            <person name="Sun E."/>
            <person name="Svirskas R."/>
            <person name="Tector C."/>
            <person name="Turner R."/>
            <person name="Venter E."/>
            <person name="Wang A.H."/>
            <person name="Wang X."/>
            <person name="Wang Z.-Y."/>
            <person name="Wassarman D.A."/>
            <person name="Weinstock G.M."/>
            <person name="Weissenbach J."/>
            <person name="Williams S.M."/>
            <person name="Woodage T."/>
            <person name="Worley K.C."/>
            <person name="Wu D."/>
            <person name="Yang S."/>
            <person name="Yao Q.A."/>
            <person name="Ye J."/>
            <person name="Yeh R.-F."/>
            <person name="Zaveri J.S."/>
            <person name="Zhan M."/>
            <person name="Zhang G."/>
            <person name="Zhao Q."/>
            <person name="Zheng L."/>
            <person name="Zheng X.H."/>
            <person name="Zhong F.N."/>
            <person name="Zhong W."/>
            <person name="Zhou X."/>
            <person name="Zhu S.C."/>
            <person name="Zhu X."/>
            <person name="Smith H.O."/>
            <person name="Gibbs R.A."/>
            <person name="Myers E.W."/>
            <person name="Rubin G.M."/>
            <person name="Venter J.C."/>
        </authorList>
    </citation>
    <scope>NUCLEOTIDE SEQUENCE [LARGE SCALE GENOMIC DNA]</scope>
    <source>
        <strain evidence="10">Berkeley</strain>
    </source>
</reference>
<reference evidence="10" key="2">
    <citation type="journal article" date="2002" name="Genome Biol.">
        <title>Annotation of the Drosophila melanogaster euchromatic genome: a systematic review.</title>
        <authorList>
            <person name="Misra S."/>
            <person name="Crosby M.A."/>
            <person name="Mungall C.J."/>
            <person name="Matthews B.B."/>
            <person name="Campbell K.S."/>
            <person name="Hradecky P."/>
            <person name="Huang Y."/>
            <person name="Kaminker J.S."/>
            <person name="Millburn G.H."/>
            <person name="Prochnik S.E."/>
            <person name="Smith C.D."/>
            <person name="Tupy J.L."/>
            <person name="Whitfield E.J."/>
            <person name="Bayraktaroglu L."/>
            <person name="Berman B.P."/>
            <person name="Bettencourt B.R."/>
            <person name="Celniker S.E."/>
            <person name="de Grey A.D.N.J."/>
            <person name="Drysdale R.A."/>
            <person name="Harris N.L."/>
            <person name="Richter J."/>
            <person name="Russo S."/>
            <person name="Schroeder A.J."/>
            <person name="Shu S.Q."/>
            <person name="Stapleton M."/>
            <person name="Yamada C."/>
            <person name="Ashburner M."/>
            <person name="Gelbart W.M."/>
            <person name="Rubin G.M."/>
            <person name="Lewis S.E."/>
        </authorList>
    </citation>
    <scope>GENOME REANNOTATION</scope>
    <source>
        <strain evidence="10">Berkeley</strain>
    </source>
</reference>
<reference evidence="8" key="3">
    <citation type="journal article" date="2000" name="Science">
        <title>From sequence to chromosome: the tip of the X chromosome of D. melanogaster.</title>
        <authorList>
            <person name="Benos P.V."/>
            <person name="Gatt M.K."/>
            <person name="Ashburner M."/>
            <person name="Murphy L."/>
            <person name="Harris D."/>
            <person name="Barrell B.G."/>
            <person name="Ferraz C."/>
            <person name="Vidal S."/>
            <person name="Brun C."/>
            <person name="Demailles J."/>
            <person name="Cadieu E."/>
            <person name="Dreano S."/>
            <person name="Gloux S."/>
            <person name="Lelaure V."/>
            <person name="Mottier S."/>
            <person name="Galibert F."/>
            <person name="Borkova D."/>
            <person name="Minana B."/>
            <person name="Kafatos F.C."/>
            <person name="Louis C."/>
            <person name="Siden-Kiamos I."/>
            <person name="Bolshakov S."/>
            <person name="Papagiannakis G."/>
            <person name="Spanos L."/>
            <person name="Cox S."/>
            <person name="Madueno E."/>
            <person name="de Pablos B."/>
            <person name="Modolell J."/>
            <person name="Peter A."/>
            <person name="Schoettler P."/>
            <person name="Werner M."/>
            <person name="Mourkioti F."/>
            <person name="Beinert N."/>
            <person name="Dowe G."/>
            <person name="Schaefer U."/>
            <person name="Jaeckle H."/>
            <person name="Bucheton A."/>
            <person name="Callister D.M."/>
            <person name="Campbell L.A."/>
            <person name="Darlamitsou A."/>
            <person name="Henderson N.S."/>
            <person name="McMillan P.J."/>
            <person name="Salles C."/>
            <person name="Tait E.A."/>
            <person name="Valenti P."/>
            <person name="Saunders R.D.C."/>
            <person name="Glover D.M."/>
        </authorList>
    </citation>
    <scope>NUCLEOTIDE SEQUENCE [LARGE SCALE GENOMIC DNA]</scope>
    <source>
        <strain evidence="8">Oregon-R</strain>
    </source>
</reference>
<reference evidence="7" key="4">
    <citation type="journal article" date="2002" name="Genome Biol.">
        <title>A Drosophila full-length cDNA resource.</title>
        <authorList>
            <person name="Stapleton M."/>
            <person name="Carlson J.W."/>
            <person name="Brokstein P."/>
            <person name="Yu C."/>
            <person name="Champe M."/>
            <person name="George R.A."/>
            <person name="Guarin H."/>
            <person name="Kronmiller B."/>
            <person name="Pacleb J.M."/>
            <person name="Park S."/>
            <person name="Wan K.H."/>
            <person name="Rubin G.M."/>
            <person name="Celniker S.E."/>
        </authorList>
    </citation>
    <scope>NUCLEOTIDE SEQUENCE [LARGE SCALE MRNA]</scope>
    <source>
        <strain evidence="7">Berkeley</strain>
        <tissue evidence="7">Embryo</tissue>
    </source>
</reference>
<reference evidence="6" key="5">
    <citation type="journal article" date="2007" name="Science">
        <title>Genes required for mitotic spindle assembly in Drosophila S2 cells.</title>
        <authorList>
            <person name="Goshima G."/>
            <person name="Wollman R."/>
            <person name="Goodwin S.S."/>
            <person name="Zhang N."/>
            <person name="Scholey J.M."/>
            <person name="Vale R.D."/>
            <person name="Stuurman N."/>
        </authorList>
    </citation>
    <scope>FUNCTION</scope>
    <scope>SUBCELLULAR LOCATION</scope>
</reference>
<reference evidence="6" key="6">
    <citation type="journal article" date="2008" name="J. Cell Biol.">
        <title>Augmin: a protein complex required for centrosome-independent microtubule generation within the spindle.</title>
        <authorList>
            <person name="Goshima G."/>
            <person name="Mayer M."/>
            <person name="Zhang N."/>
            <person name="Stuurman N."/>
            <person name="Vale R.D."/>
        </authorList>
    </citation>
    <scope>FUNCTION</scope>
    <scope>IDENTIFICATION IN THE AUGMIN COMPLEX</scope>
    <scope>SUBCELLULAR LOCATION</scope>
</reference>
<reference evidence="6" key="7">
    <citation type="journal article" date="2009" name="Proc. Natl. Acad. Sci. U.S.A.">
        <title>The augmin complex plays a critical role in spindle microtubule generation for mitotic progression and cytokinesis in human cells.</title>
        <authorList>
            <person name="Uehara R."/>
            <person name="Nozawa R.-S."/>
            <person name="Tomioka A."/>
            <person name="Petry S."/>
            <person name="Vale R.D."/>
            <person name="Obuse C."/>
            <person name="Goshima G."/>
        </authorList>
    </citation>
    <scope>IDENTIFICATION IN THE AUGMIN COMPLEX</scope>
    <scope>IDENTIFICATION BY MASS SPECTROMETRY</scope>
</reference>
<name>DGT4_DROME</name>
<sequence length="188" mass="21425">METPPTPTTTTPPSLTTEGTMDDIQYLLHLEAMRRFQEDSRNVKRQVEEQVRIWLDAKCEYQRDFGRLARLLKCGALQAAVDAHRVSDVNQVDQAAKDIASLRSKLGSDLRPAILDSNDVKQCLEHLNTTHKPRLNLCRQQREFAQNQEALRSLRTAVDGLENGMEMGMIQAMDRLVEDLLPPRETNN</sequence>
<proteinExistence type="evidence at protein level"/>
<keyword id="KW-0131">Cell cycle</keyword>
<keyword id="KW-0132">Cell division</keyword>
<keyword id="KW-0175">Coiled coil</keyword>
<keyword id="KW-0963">Cytoplasm</keyword>
<keyword id="KW-0206">Cytoskeleton</keyword>
<keyword id="KW-0493">Microtubule</keyword>
<keyword id="KW-0498">Mitosis</keyword>
<keyword id="KW-1185">Reference proteome</keyword>
<comment type="function">
    <text evidence="2 3">As part of the augmin complex, plays a role in centrosome-independent generation of spindle microtubules (PubMed:18443220). The complex is required for mitotic spindle assembly through its involvement in localizing gamma-tubulin to spindle microtubules (PubMed:17412918).</text>
</comment>
<comment type="subunit">
    <text evidence="3 4">Component of the augmin complex composed of dgt2, dgt3, dgt4, dgt5, dgt6, msd1, msd5 and wac (PubMed:18443220, PubMed:19369198). The complex interacts directly or indirectly with microtubules and is required for centrosome-independent generation of spindle microtubules (PubMed:18443220).</text>
</comment>
<comment type="interaction">
    <interactant intactId="EBI-125735">
        <id>Q9W4M8</id>
    </interactant>
    <interactant intactId="EBI-186540">
        <id>Q9VAP2</id>
        <label>dgt6</label>
    </interactant>
    <organismsDiffer>false</organismsDiffer>
    <experiments>5</experiments>
</comment>
<comment type="subcellular location">
    <subcellularLocation>
        <location evidence="2 3">Cytoplasm</location>
        <location evidence="2 3">Cytoskeleton</location>
        <location evidence="2 3">Spindle</location>
    </subcellularLocation>
</comment>
<comment type="miscellaneous">
    <text evidence="5">The name 'dim gamma-tubulin 4' derives from the decreased gamma-tubulin staining of the spindle pole seen following RNAi-mediated knockdown of dgt4 in S2 cells.</text>
</comment>
<comment type="sequence caution" evidence="6">
    <conflict type="erroneous initiation">
        <sequence resource="EMBL-CDS" id="CAA21830"/>
    </conflict>
    <text>Truncated N-terminus.</text>
</comment>
<accession>Q9W4M8</accession>
<accession>O97426</accession>
<accession>Q7K763</accession>
<protein>
    <recommendedName>
        <fullName evidence="6">Augmin complex subunit dgt4</fullName>
    </recommendedName>
    <alternativeName>
        <fullName evidence="5">Dim gamma-tubulin 4</fullName>
    </alternativeName>
</protein>
<organism evidence="10">
    <name type="scientific">Drosophila melanogaster</name>
    <name type="common">Fruit fly</name>
    <dbReference type="NCBI Taxonomy" id="7227"/>
    <lineage>
        <taxon>Eukaryota</taxon>
        <taxon>Metazoa</taxon>
        <taxon>Ecdysozoa</taxon>
        <taxon>Arthropoda</taxon>
        <taxon>Hexapoda</taxon>
        <taxon>Insecta</taxon>
        <taxon>Pterygota</taxon>
        <taxon>Neoptera</taxon>
        <taxon>Endopterygota</taxon>
        <taxon>Diptera</taxon>
        <taxon>Brachycera</taxon>
        <taxon>Muscomorpha</taxon>
        <taxon>Ephydroidea</taxon>
        <taxon>Drosophilidae</taxon>
        <taxon>Drosophila</taxon>
        <taxon>Sophophora</taxon>
    </lineage>
</organism>
<gene>
    <name evidence="5 9" type="primary">dgt4</name>
    <name evidence="9" type="ORF">CG4865</name>
</gene>
<dbReference type="EMBL" id="AE014298">
    <property type="protein sequence ID" value="AAF45922.1"/>
    <property type="molecule type" value="Genomic_DNA"/>
</dbReference>
<dbReference type="EMBL" id="AE014298">
    <property type="protein sequence ID" value="AGB95077.1"/>
    <property type="molecule type" value="Genomic_DNA"/>
</dbReference>
<dbReference type="EMBL" id="AE014298">
    <property type="protein sequence ID" value="AGB95078.1"/>
    <property type="molecule type" value="Genomic_DNA"/>
</dbReference>
<dbReference type="EMBL" id="AL033125">
    <property type="protein sequence ID" value="CAA21830.1"/>
    <property type="status" value="ALT_INIT"/>
    <property type="molecule type" value="Genomic_DNA"/>
</dbReference>
<dbReference type="EMBL" id="AY119277">
    <property type="protein sequence ID" value="AAM51137.1"/>
    <property type="molecule type" value="mRNA"/>
</dbReference>
<dbReference type="RefSeq" id="NP_001259231.1">
    <property type="nucleotide sequence ID" value="NM_001272302.1"/>
</dbReference>
<dbReference type="RefSeq" id="NP_001259232.1">
    <property type="nucleotide sequence ID" value="NM_001272303.1"/>
</dbReference>
<dbReference type="RefSeq" id="NP_572150.1">
    <property type="nucleotide sequence ID" value="NM_131922.3"/>
</dbReference>
<dbReference type="SMR" id="Q9W4M8"/>
<dbReference type="ComplexPortal" id="CPX-9861">
    <property type="entry name" value="Augmin complex"/>
</dbReference>
<dbReference type="FunCoup" id="Q9W4M8">
    <property type="interactions" value="30"/>
</dbReference>
<dbReference type="IntAct" id="Q9W4M8">
    <property type="interactions" value="15"/>
</dbReference>
<dbReference type="STRING" id="7227.FBpp0305385"/>
<dbReference type="GlyGen" id="Q9W4M8">
    <property type="glycosylation" value="1 site"/>
</dbReference>
<dbReference type="PaxDb" id="7227-FBpp0305385"/>
<dbReference type="DNASU" id="31361"/>
<dbReference type="EnsemblMetazoa" id="FBtr0070642">
    <property type="protein sequence ID" value="FBpp0070610"/>
    <property type="gene ID" value="FBgn0026085"/>
</dbReference>
<dbReference type="EnsemblMetazoa" id="FBtr0333183">
    <property type="protein sequence ID" value="FBpp0305385"/>
    <property type="gene ID" value="FBgn0026085"/>
</dbReference>
<dbReference type="EnsemblMetazoa" id="FBtr0333184">
    <property type="protein sequence ID" value="FBpp0305386"/>
    <property type="gene ID" value="FBgn0026085"/>
</dbReference>
<dbReference type="GeneID" id="31361"/>
<dbReference type="KEGG" id="dme:Dmel_CG4865"/>
<dbReference type="UCSC" id="CG4865-RA">
    <property type="organism name" value="d. melanogaster"/>
</dbReference>
<dbReference type="AGR" id="FB:FBgn0026085"/>
<dbReference type="CTD" id="31361"/>
<dbReference type="FlyBase" id="FBgn0026085">
    <property type="gene designation" value="dgt4"/>
</dbReference>
<dbReference type="VEuPathDB" id="VectorBase:FBgn0026085"/>
<dbReference type="eggNOG" id="ENOG502TBCP">
    <property type="taxonomic scope" value="Eukaryota"/>
</dbReference>
<dbReference type="HOGENOM" id="CLU_117821_0_0_1"/>
<dbReference type="InParanoid" id="Q9W4M8"/>
<dbReference type="OMA" id="KCEYQRE"/>
<dbReference type="OrthoDB" id="7947102at2759"/>
<dbReference type="PhylomeDB" id="Q9W4M8"/>
<dbReference type="BioGRID-ORCS" id="31361">
    <property type="hits" value="0 hits in 1 CRISPR screen"/>
</dbReference>
<dbReference type="GenomeRNAi" id="31361"/>
<dbReference type="PRO" id="PR:Q9W4M8"/>
<dbReference type="Proteomes" id="UP000000803">
    <property type="component" value="Chromosome X"/>
</dbReference>
<dbReference type="Bgee" id="FBgn0026085">
    <property type="expression patterns" value="Expressed in secondary oocyte and 31 other cell types or tissues"/>
</dbReference>
<dbReference type="GO" id="GO:0005737">
    <property type="term" value="C:cytoplasm"/>
    <property type="evidence" value="ECO:0007669"/>
    <property type="project" value="UniProtKB-KW"/>
</dbReference>
<dbReference type="GO" id="GO:0070652">
    <property type="term" value="C:HAUS complex"/>
    <property type="evidence" value="ECO:0000314"/>
    <property type="project" value="FlyBase"/>
</dbReference>
<dbReference type="GO" id="GO:0005874">
    <property type="term" value="C:microtubule"/>
    <property type="evidence" value="ECO:0007669"/>
    <property type="project" value="UniProtKB-KW"/>
</dbReference>
<dbReference type="GO" id="GO:0005819">
    <property type="term" value="C:spindle"/>
    <property type="evidence" value="ECO:0000314"/>
    <property type="project" value="FlyBase"/>
</dbReference>
<dbReference type="GO" id="GO:0051301">
    <property type="term" value="P:cell division"/>
    <property type="evidence" value="ECO:0007669"/>
    <property type="project" value="UniProtKB-KW"/>
</dbReference>
<dbReference type="GO" id="GO:0090307">
    <property type="term" value="P:mitotic spindle assembly"/>
    <property type="evidence" value="ECO:0000305"/>
    <property type="project" value="FlyBase"/>
</dbReference>
<dbReference type="GO" id="GO:0007052">
    <property type="term" value="P:mitotic spindle organization"/>
    <property type="evidence" value="ECO:0000315"/>
    <property type="project" value="FlyBase"/>
</dbReference>
<dbReference type="GO" id="GO:0090221">
    <property type="term" value="P:mitotic spindle-templated microtubule nucleation"/>
    <property type="evidence" value="ECO:0000314"/>
    <property type="project" value="FlyBase"/>
</dbReference>
<dbReference type="GO" id="GO:0007088">
    <property type="term" value="P:regulation of mitotic nuclear division"/>
    <property type="evidence" value="ECO:0000315"/>
    <property type="project" value="FlyBase"/>
</dbReference>
<feature type="chain" id="PRO_0000438653" description="Augmin complex subunit dgt4" evidence="6">
    <location>
        <begin position="1"/>
        <end position="188"/>
    </location>
</feature>
<feature type="coiled-coil region" evidence="1">
    <location>
        <begin position="141"/>
        <end position="163"/>
    </location>
</feature>